<protein>
    <recommendedName>
        <fullName>Putative zinc finger protein 833</fullName>
    </recommendedName>
</protein>
<dbReference type="EMBL" id="AK126753">
    <property type="protein sequence ID" value="BAC86674.1"/>
    <property type="molecule type" value="mRNA"/>
</dbReference>
<dbReference type="EMBL" id="CH471106">
    <property type="protein sequence ID" value="EAW84238.1"/>
    <property type="molecule type" value="Genomic_DNA"/>
</dbReference>
<dbReference type="EMBL" id="BC137336">
    <property type="protein sequence ID" value="AAI37337.1"/>
    <property type="molecule type" value="mRNA"/>
</dbReference>
<dbReference type="EMBL" id="BC137337">
    <property type="protein sequence ID" value="AAI37338.1"/>
    <property type="molecule type" value="mRNA"/>
</dbReference>
<dbReference type="SMR" id="Q6ZTB9"/>
<dbReference type="FunCoup" id="Q6ZTB9">
    <property type="interactions" value="446"/>
</dbReference>
<dbReference type="iPTMnet" id="Q6ZTB9"/>
<dbReference type="PhosphoSitePlus" id="Q6ZTB9"/>
<dbReference type="BioMuta" id="HGNC:33819"/>
<dbReference type="DMDM" id="74758823"/>
<dbReference type="jPOST" id="Q6ZTB9"/>
<dbReference type="MassIVE" id="Q6ZTB9"/>
<dbReference type="PeptideAtlas" id="Q6ZTB9"/>
<dbReference type="ProteomicsDB" id="68271"/>
<dbReference type="AGR" id="HGNC:33819"/>
<dbReference type="GeneCards" id="ZNF833P"/>
<dbReference type="HGNC" id="HGNC:33819">
    <property type="gene designation" value="ZNF833P"/>
</dbReference>
<dbReference type="neXtProt" id="NX_Q6ZTB9"/>
<dbReference type="PharmGKB" id="PA162410775"/>
<dbReference type="InParanoid" id="Q6ZTB9"/>
<dbReference type="PAN-GO" id="Q6ZTB9">
    <property type="GO annotations" value="0 GO annotations based on evolutionary models"/>
</dbReference>
<dbReference type="PhylomeDB" id="Q6ZTB9"/>
<dbReference type="PathwayCommons" id="Q6ZTB9"/>
<dbReference type="ChiTaRS" id="ZNF833P">
    <property type="organism name" value="human"/>
</dbReference>
<dbReference type="Pharos" id="Q6ZTB9">
    <property type="development level" value="Tdark"/>
</dbReference>
<dbReference type="PRO" id="PR:Q6ZTB9"/>
<dbReference type="Proteomes" id="UP000005640">
    <property type="component" value="Unplaced"/>
</dbReference>
<dbReference type="RNAct" id="Q6ZTB9">
    <property type="molecule type" value="protein"/>
</dbReference>
<dbReference type="GO" id="GO:0005634">
    <property type="term" value="C:nucleus"/>
    <property type="evidence" value="ECO:0000318"/>
    <property type="project" value="GO_Central"/>
</dbReference>
<dbReference type="GO" id="GO:0003700">
    <property type="term" value="F:DNA-binding transcription factor activity"/>
    <property type="evidence" value="ECO:0000303"/>
    <property type="project" value="ARUK-UCL"/>
</dbReference>
<dbReference type="GO" id="GO:0008270">
    <property type="term" value="F:zinc ion binding"/>
    <property type="evidence" value="ECO:0007669"/>
    <property type="project" value="UniProtKB-KW"/>
</dbReference>
<dbReference type="GO" id="GO:0010468">
    <property type="term" value="P:regulation of gene expression"/>
    <property type="evidence" value="ECO:0000318"/>
    <property type="project" value="GO_Central"/>
</dbReference>
<dbReference type="FunFam" id="3.30.160.60:FF:001732">
    <property type="entry name" value="Zgc:162936"/>
    <property type="match status" value="1"/>
</dbReference>
<dbReference type="FunFam" id="3.30.160.60:FF:000838">
    <property type="entry name" value="Zinc finger protein 14"/>
    <property type="match status" value="1"/>
</dbReference>
<dbReference type="FunFam" id="3.30.160.60:FF:000522">
    <property type="entry name" value="zinc finger protein 285"/>
    <property type="match status" value="1"/>
</dbReference>
<dbReference type="FunFam" id="3.30.160.60:FF:000184">
    <property type="entry name" value="Zinc finger protein 333"/>
    <property type="match status" value="2"/>
</dbReference>
<dbReference type="FunFam" id="3.30.160.60:FF:000371">
    <property type="entry name" value="Zinc finger protein 555"/>
    <property type="match status" value="1"/>
</dbReference>
<dbReference type="Gene3D" id="3.30.160.60">
    <property type="entry name" value="Classic Zinc Finger"/>
    <property type="match status" value="6"/>
</dbReference>
<dbReference type="InterPro" id="IPR036236">
    <property type="entry name" value="Znf_C2H2_sf"/>
</dbReference>
<dbReference type="InterPro" id="IPR013087">
    <property type="entry name" value="Znf_C2H2_type"/>
</dbReference>
<dbReference type="PANTHER" id="PTHR23235:SF178">
    <property type="entry name" value="C2H2-TYPE DOMAIN-CONTAINING PROTEIN-RELATED"/>
    <property type="match status" value="1"/>
</dbReference>
<dbReference type="PANTHER" id="PTHR23235">
    <property type="entry name" value="KRUEPPEL-LIKE TRANSCRIPTION FACTOR"/>
    <property type="match status" value="1"/>
</dbReference>
<dbReference type="Pfam" id="PF00096">
    <property type="entry name" value="zf-C2H2"/>
    <property type="match status" value="5"/>
</dbReference>
<dbReference type="SMART" id="SM00355">
    <property type="entry name" value="ZnF_C2H2"/>
    <property type="match status" value="6"/>
</dbReference>
<dbReference type="SUPFAM" id="SSF57667">
    <property type="entry name" value="beta-beta-alpha zinc fingers"/>
    <property type="match status" value="4"/>
</dbReference>
<dbReference type="PROSITE" id="PS00028">
    <property type="entry name" value="ZINC_FINGER_C2H2_1"/>
    <property type="match status" value="6"/>
</dbReference>
<dbReference type="PROSITE" id="PS50157">
    <property type="entry name" value="ZINC_FINGER_C2H2_2"/>
    <property type="match status" value="6"/>
</dbReference>
<sequence>MVMHSEDEPYKCKFCGKAFDNLHLYLTHERTHTGEKPYECNKCGKAFSCSSSIRKHARIHTGEKPYICKQCGKAFRYSSSIRNHENTHTGEKPCECKQCGKAFSYSSYFRIHERIHTGEQVYKCKECGKTFTYPSAFHKHKSTHTSQKLYECKECGKAFDCFSSFHSHEGVHTGEKPYECRTWKSLQ</sequence>
<proteinExistence type="uncertain"/>
<gene>
    <name type="primary">ZNF833P</name>
    <name type="synonym">ZNF833</name>
</gene>
<keyword id="KW-0479">Metal-binding</keyword>
<keyword id="KW-1185">Reference proteome</keyword>
<keyword id="KW-0677">Repeat</keyword>
<keyword id="KW-0862">Zinc</keyword>
<keyword id="KW-0863">Zinc-finger</keyword>
<evidence type="ECO:0000255" key="1">
    <source>
        <dbReference type="PROSITE-ProRule" id="PRU00042"/>
    </source>
</evidence>
<evidence type="ECO:0000305" key="2"/>
<reference key="1">
    <citation type="journal article" date="2004" name="Nat. Genet.">
        <title>Complete sequencing and characterization of 21,243 full-length human cDNAs.</title>
        <authorList>
            <person name="Ota T."/>
            <person name="Suzuki Y."/>
            <person name="Nishikawa T."/>
            <person name="Otsuki T."/>
            <person name="Sugiyama T."/>
            <person name="Irie R."/>
            <person name="Wakamatsu A."/>
            <person name="Hayashi K."/>
            <person name="Sato H."/>
            <person name="Nagai K."/>
            <person name="Kimura K."/>
            <person name="Makita H."/>
            <person name="Sekine M."/>
            <person name="Obayashi M."/>
            <person name="Nishi T."/>
            <person name="Shibahara T."/>
            <person name="Tanaka T."/>
            <person name="Ishii S."/>
            <person name="Yamamoto J."/>
            <person name="Saito K."/>
            <person name="Kawai Y."/>
            <person name="Isono Y."/>
            <person name="Nakamura Y."/>
            <person name="Nagahari K."/>
            <person name="Murakami K."/>
            <person name="Yasuda T."/>
            <person name="Iwayanagi T."/>
            <person name="Wagatsuma M."/>
            <person name="Shiratori A."/>
            <person name="Sudo H."/>
            <person name="Hosoiri T."/>
            <person name="Kaku Y."/>
            <person name="Kodaira H."/>
            <person name="Kondo H."/>
            <person name="Sugawara M."/>
            <person name="Takahashi M."/>
            <person name="Kanda K."/>
            <person name="Yokoi T."/>
            <person name="Furuya T."/>
            <person name="Kikkawa E."/>
            <person name="Omura Y."/>
            <person name="Abe K."/>
            <person name="Kamihara K."/>
            <person name="Katsuta N."/>
            <person name="Sato K."/>
            <person name="Tanikawa M."/>
            <person name="Yamazaki M."/>
            <person name="Ninomiya K."/>
            <person name="Ishibashi T."/>
            <person name="Yamashita H."/>
            <person name="Murakawa K."/>
            <person name="Fujimori K."/>
            <person name="Tanai H."/>
            <person name="Kimata M."/>
            <person name="Watanabe M."/>
            <person name="Hiraoka S."/>
            <person name="Chiba Y."/>
            <person name="Ishida S."/>
            <person name="Ono Y."/>
            <person name="Takiguchi S."/>
            <person name="Watanabe S."/>
            <person name="Yosida M."/>
            <person name="Hotuta T."/>
            <person name="Kusano J."/>
            <person name="Kanehori K."/>
            <person name="Takahashi-Fujii A."/>
            <person name="Hara H."/>
            <person name="Tanase T.-O."/>
            <person name="Nomura Y."/>
            <person name="Togiya S."/>
            <person name="Komai F."/>
            <person name="Hara R."/>
            <person name="Takeuchi K."/>
            <person name="Arita M."/>
            <person name="Imose N."/>
            <person name="Musashino K."/>
            <person name="Yuuki H."/>
            <person name="Oshima A."/>
            <person name="Sasaki N."/>
            <person name="Aotsuka S."/>
            <person name="Yoshikawa Y."/>
            <person name="Matsunawa H."/>
            <person name="Ichihara T."/>
            <person name="Shiohata N."/>
            <person name="Sano S."/>
            <person name="Moriya S."/>
            <person name="Momiyama H."/>
            <person name="Satoh N."/>
            <person name="Takami S."/>
            <person name="Terashima Y."/>
            <person name="Suzuki O."/>
            <person name="Nakagawa S."/>
            <person name="Senoh A."/>
            <person name="Mizoguchi H."/>
            <person name="Goto Y."/>
            <person name="Shimizu F."/>
            <person name="Wakebe H."/>
            <person name="Hishigaki H."/>
            <person name="Watanabe T."/>
            <person name="Sugiyama A."/>
            <person name="Takemoto M."/>
            <person name="Kawakami B."/>
            <person name="Yamazaki M."/>
            <person name="Watanabe K."/>
            <person name="Kumagai A."/>
            <person name="Itakura S."/>
            <person name="Fukuzumi Y."/>
            <person name="Fujimori Y."/>
            <person name="Komiyama M."/>
            <person name="Tashiro H."/>
            <person name="Tanigami A."/>
            <person name="Fujiwara T."/>
            <person name="Ono T."/>
            <person name="Yamada K."/>
            <person name="Fujii Y."/>
            <person name="Ozaki K."/>
            <person name="Hirao M."/>
            <person name="Ohmori Y."/>
            <person name="Kawabata A."/>
            <person name="Hikiji T."/>
            <person name="Kobatake N."/>
            <person name="Inagaki H."/>
            <person name="Ikema Y."/>
            <person name="Okamoto S."/>
            <person name="Okitani R."/>
            <person name="Kawakami T."/>
            <person name="Noguchi S."/>
            <person name="Itoh T."/>
            <person name="Shigeta K."/>
            <person name="Senba T."/>
            <person name="Matsumura K."/>
            <person name="Nakajima Y."/>
            <person name="Mizuno T."/>
            <person name="Morinaga M."/>
            <person name="Sasaki M."/>
            <person name="Togashi T."/>
            <person name="Oyama M."/>
            <person name="Hata H."/>
            <person name="Watanabe M."/>
            <person name="Komatsu T."/>
            <person name="Mizushima-Sugano J."/>
            <person name="Satoh T."/>
            <person name="Shirai Y."/>
            <person name="Takahashi Y."/>
            <person name="Nakagawa K."/>
            <person name="Okumura K."/>
            <person name="Nagase T."/>
            <person name="Nomura N."/>
            <person name="Kikuchi H."/>
            <person name="Masuho Y."/>
            <person name="Yamashita R."/>
            <person name="Nakai K."/>
            <person name="Yada T."/>
            <person name="Nakamura Y."/>
            <person name="Ohara O."/>
            <person name="Isogai T."/>
            <person name="Sugano S."/>
        </authorList>
    </citation>
    <scope>NUCLEOTIDE SEQUENCE [LARGE SCALE MRNA]</scope>
    <source>
        <tissue>Cerebellum</tissue>
    </source>
</reference>
<reference key="2">
    <citation type="submission" date="2005-07" db="EMBL/GenBank/DDBJ databases">
        <authorList>
            <person name="Mural R.J."/>
            <person name="Istrail S."/>
            <person name="Sutton G.G."/>
            <person name="Florea L."/>
            <person name="Halpern A.L."/>
            <person name="Mobarry C.M."/>
            <person name="Lippert R."/>
            <person name="Walenz B."/>
            <person name="Shatkay H."/>
            <person name="Dew I."/>
            <person name="Miller J.R."/>
            <person name="Flanigan M.J."/>
            <person name="Edwards N.J."/>
            <person name="Bolanos R."/>
            <person name="Fasulo D."/>
            <person name="Halldorsson B.V."/>
            <person name="Hannenhalli S."/>
            <person name="Turner R."/>
            <person name="Yooseph S."/>
            <person name="Lu F."/>
            <person name="Nusskern D.R."/>
            <person name="Shue B.C."/>
            <person name="Zheng X.H."/>
            <person name="Zhong F."/>
            <person name="Delcher A.L."/>
            <person name="Huson D.H."/>
            <person name="Kravitz S.A."/>
            <person name="Mouchard L."/>
            <person name="Reinert K."/>
            <person name="Remington K.A."/>
            <person name="Clark A.G."/>
            <person name="Waterman M.S."/>
            <person name="Eichler E.E."/>
            <person name="Adams M.D."/>
            <person name="Hunkapiller M.W."/>
            <person name="Myers E.W."/>
            <person name="Venter J.C."/>
        </authorList>
    </citation>
    <scope>NUCLEOTIDE SEQUENCE [LARGE SCALE GENOMIC DNA]</scope>
</reference>
<reference key="3">
    <citation type="journal article" date="2004" name="Genome Res.">
        <title>The status, quality, and expansion of the NIH full-length cDNA project: the Mammalian Gene Collection (MGC).</title>
        <authorList>
            <consortium name="The MGC Project Team"/>
        </authorList>
    </citation>
    <scope>NUCLEOTIDE SEQUENCE [LARGE SCALE MRNA]</scope>
</reference>
<feature type="chain" id="PRO_0000325818" description="Putative zinc finger protein 833">
    <location>
        <begin position="1"/>
        <end position="187"/>
    </location>
</feature>
<feature type="zinc finger region" description="C2H2-type 1" evidence="1">
    <location>
        <begin position="10"/>
        <end position="32"/>
    </location>
</feature>
<feature type="zinc finger region" description="C2H2-type 2" evidence="1">
    <location>
        <begin position="38"/>
        <end position="60"/>
    </location>
</feature>
<feature type="zinc finger region" description="C2H2-type 3" evidence="1">
    <location>
        <begin position="66"/>
        <end position="88"/>
    </location>
</feature>
<feature type="zinc finger region" description="C2H2-type 4" evidence="1">
    <location>
        <begin position="94"/>
        <end position="116"/>
    </location>
</feature>
<feature type="zinc finger region" description="C2H2-type 5" evidence="1">
    <location>
        <begin position="122"/>
        <end position="144"/>
    </location>
</feature>
<feature type="zinc finger region" description="C2H2-type 6" evidence="1">
    <location>
        <begin position="150"/>
        <end position="172"/>
    </location>
</feature>
<name>ZN833_HUMAN</name>
<accession>Q6ZTB9</accession>
<accession>B2RPA0</accession>
<comment type="caution">
    <text evidence="2">Could be the product of a pseudogene.</text>
</comment>
<organism>
    <name type="scientific">Homo sapiens</name>
    <name type="common">Human</name>
    <dbReference type="NCBI Taxonomy" id="9606"/>
    <lineage>
        <taxon>Eukaryota</taxon>
        <taxon>Metazoa</taxon>
        <taxon>Chordata</taxon>
        <taxon>Craniata</taxon>
        <taxon>Vertebrata</taxon>
        <taxon>Euteleostomi</taxon>
        <taxon>Mammalia</taxon>
        <taxon>Eutheria</taxon>
        <taxon>Euarchontoglires</taxon>
        <taxon>Primates</taxon>
        <taxon>Haplorrhini</taxon>
        <taxon>Catarrhini</taxon>
        <taxon>Hominidae</taxon>
        <taxon>Homo</taxon>
    </lineage>
</organism>